<proteinExistence type="inferred from homology"/>
<keyword id="KW-0997">Cell inner membrane</keyword>
<keyword id="KW-1003">Cell membrane</keyword>
<keyword id="KW-0249">Electron transport</keyword>
<keyword id="KW-0285">Flavoprotein</keyword>
<keyword id="KW-0288">FMN</keyword>
<keyword id="KW-0472">Membrane</keyword>
<keyword id="KW-0597">Phosphoprotein</keyword>
<keyword id="KW-1278">Translocase</keyword>
<keyword id="KW-0812">Transmembrane</keyword>
<keyword id="KW-1133">Transmembrane helix</keyword>
<keyword id="KW-0813">Transport</keyword>
<organism>
    <name type="scientific">Colwellia psychrerythraea (strain 34H / ATCC BAA-681)</name>
    <name type="common">Vibrio psychroerythus</name>
    <dbReference type="NCBI Taxonomy" id="167879"/>
    <lineage>
        <taxon>Bacteria</taxon>
        <taxon>Pseudomonadati</taxon>
        <taxon>Pseudomonadota</taxon>
        <taxon>Gammaproteobacteria</taxon>
        <taxon>Alteromonadales</taxon>
        <taxon>Colwelliaceae</taxon>
        <taxon>Colwellia</taxon>
    </lineage>
</organism>
<reference key="1">
    <citation type="journal article" date="2005" name="Proc. Natl. Acad. Sci. U.S.A.">
        <title>The psychrophilic lifestyle as revealed by the genome sequence of Colwellia psychrerythraea 34H through genomic and proteomic analyses.</title>
        <authorList>
            <person name="Methe B.A."/>
            <person name="Nelson K.E."/>
            <person name="Deming J.W."/>
            <person name="Momen B."/>
            <person name="Melamud E."/>
            <person name="Zhang X."/>
            <person name="Moult J."/>
            <person name="Madupu R."/>
            <person name="Nelson W.C."/>
            <person name="Dodson R.J."/>
            <person name="Brinkac L.M."/>
            <person name="Daugherty S.C."/>
            <person name="Durkin A.S."/>
            <person name="DeBoy R.T."/>
            <person name="Kolonay J.F."/>
            <person name="Sullivan S.A."/>
            <person name="Zhou L."/>
            <person name="Davidsen T.M."/>
            <person name="Wu M."/>
            <person name="Huston A.L."/>
            <person name="Lewis M."/>
            <person name="Weaver B."/>
            <person name="Weidman J.F."/>
            <person name="Khouri H."/>
            <person name="Utterback T.R."/>
            <person name="Feldblyum T.V."/>
            <person name="Fraser C.M."/>
        </authorList>
    </citation>
    <scope>NUCLEOTIDE SEQUENCE [LARGE SCALE GENOMIC DNA]</scope>
    <source>
        <strain>34H / ATCC BAA-681</strain>
    </source>
</reference>
<comment type="function">
    <text evidence="1">Part of a membrane-bound complex that couples electron transfer with translocation of ions across the membrane.</text>
</comment>
<comment type="cofactor">
    <cofactor evidence="1">
        <name>FMN</name>
        <dbReference type="ChEBI" id="CHEBI:58210"/>
    </cofactor>
</comment>
<comment type="subunit">
    <text evidence="1">The complex is composed of six subunits: RnfA, RnfB, RnfC, RnfD, RnfE and RnfG.</text>
</comment>
<comment type="subcellular location">
    <subcellularLocation>
        <location evidence="1">Cell inner membrane</location>
        <topology evidence="1">Multi-pass membrane protein</topology>
    </subcellularLocation>
</comment>
<comment type="similarity">
    <text evidence="1">Belongs to the NqrB/RnfD family.</text>
</comment>
<accession>Q482U6</accession>
<evidence type="ECO:0000255" key="1">
    <source>
        <dbReference type="HAMAP-Rule" id="MF_00462"/>
    </source>
</evidence>
<protein>
    <recommendedName>
        <fullName evidence="1">Ion-translocating oxidoreductase complex subunit D</fullName>
        <ecNumber evidence="1">7.-.-.-</ecNumber>
    </recommendedName>
    <alternativeName>
        <fullName evidence="1">Rnf electron transport complex subunit D</fullName>
    </alternativeName>
</protein>
<sequence length="353" mass="38469">MAFWIASSPHNHNHTKTPNLMRLVIYATLPGVLAQWYFFGWGNLIHIGLAMTTAIICEFTVLSLRKKPISHELFDGSALLTALLLGICLPALAPWWITVIGTMFAIVIVKQLYGGLGHNPFNPAMAGYVMLLVSFPLQMTLWQPPLTLVAVDLNFTNTLTTILTGFTVEGYSVEQVRTSIDGITMATPLDTLKTNTGLGLTVLESIKNPIFGENLALGWEWVNAGFLLGGLFLISRKAIAWQTPISFLLSLFICSFIGYSISPDSSASTMFHWFSGATMLGAFFILTDPVTGATSNKGRIIVGLLAGLLVYLIRTSGGYPDGVAFAILLCNMSAPLIDQYTRPRTYGHLKGDK</sequence>
<gene>
    <name evidence="1" type="primary">rnfD</name>
    <name type="ordered locus">CPS_2196</name>
</gene>
<dbReference type="EC" id="7.-.-.-" evidence="1"/>
<dbReference type="EMBL" id="CP000083">
    <property type="protein sequence ID" value="AAZ24953.1"/>
    <property type="molecule type" value="Genomic_DNA"/>
</dbReference>
<dbReference type="SMR" id="Q482U6"/>
<dbReference type="STRING" id="167879.CPS_2196"/>
<dbReference type="KEGG" id="cps:CPS_2196"/>
<dbReference type="eggNOG" id="COG4658">
    <property type="taxonomic scope" value="Bacteria"/>
</dbReference>
<dbReference type="HOGENOM" id="CLU_042020_0_0_6"/>
<dbReference type="Proteomes" id="UP000000547">
    <property type="component" value="Chromosome"/>
</dbReference>
<dbReference type="GO" id="GO:0005886">
    <property type="term" value="C:plasma membrane"/>
    <property type="evidence" value="ECO:0007669"/>
    <property type="project" value="UniProtKB-SubCell"/>
</dbReference>
<dbReference type="GO" id="GO:0022900">
    <property type="term" value="P:electron transport chain"/>
    <property type="evidence" value="ECO:0007669"/>
    <property type="project" value="UniProtKB-UniRule"/>
</dbReference>
<dbReference type="GO" id="GO:0055085">
    <property type="term" value="P:transmembrane transport"/>
    <property type="evidence" value="ECO:0007669"/>
    <property type="project" value="InterPro"/>
</dbReference>
<dbReference type="HAMAP" id="MF_00462">
    <property type="entry name" value="RsxD_RnfD"/>
    <property type="match status" value="1"/>
</dbReference>
<dbReference type="InterPro" id="IPR004338">
    <property type="entry name" value="NqrB/RnfD"/>
</dbReference>
<dbReference type="InterPro" id="IPR011303">
    <property type="entry name" value="RnfD_bac"/>
</dbReference>
<dbReference type="NCBIfam" id="NF002011">
    <property type="entry name" value="PRK00816.1"/>
    <property type="match status" value="1"/>
</dbReference>
<dbReference type="NCBIfam" id="TIGR01946">
    <property type="entry name" value="rnfD"/>
    <property type="match status" value="1"/>
</dbReference>
<dbReference type="PANTHER" id="PTHR30578">
    <property type="entry name" value="ELECTRON TRANSPORT COMPLEX PROTEIN RNFD"/>
    <property type="match status" value="1"/>
</dbReference>
<dbReference type="PANTHER" id="PTHR30578:SF0">
    <property type="entry name" value="ION-TRANSLOCATING OXIDOREDUCTASE COMPLEX SUBUNIT D"/>
    <property type="match status" value="1"/>
</dbReference>
<dbReference type="Pfam" id="PF03116">
    <property type="entry name" value="NQR2_RnfD_RnfE"/>
    <property type="match status" value="1"/>
</dbReference>
<name>RNFD_COLP3</name>
<feature type="chain" id="PRO_1000081145" description="Ion-translocating oxidoreductase complex subunit D">
    <location>
        <begin position="1"/>
        <end position="353"/>
    </location>
</feature>
<feature type="transmembrane region" description="Helical" evidence="1">
    <location>
        <begin position="20"/>
        <end position="39"/>
    </location>
</feature>
<feature type="transmembrane region" description="Helical" evidence="1">
    <location>
        <begin position="68"/>
        <end position="88"/>
    </location>
</feature>
<feature type="transmembrane region" description="Helical" evidence="1">
    <location>
        <begin position="129"/>
        <end position="149"/>
    </location>
</feature>
<feature type="transmembrane region" description="Helical" evidence="1">
    <location>
        <begin position="215"/>
        <end position="235"/>
    </location>
</feature>
<feature type="transmembrane region" description="Helical" evidence="1">
    <location>
        <begin position="238"/>
        <end position="258"/>
    </location>
</feature>
<feature type="transmembrane region" description="Helical" evidence="1">
    <location>
        <begin position="267"/>
        <end position="287"/>
    </location>
</feature>
<feature type="transmembrane region" description="Helical" evidence="1">
    <location>
        <begin position="300"/>
        <end position="320"/>
    </location>
</feature>
<feature type="modified residue" description="FMN phosphoryl threonine" evidence="1">
    <location>
        <position position="187"/>
    </location>
</feature>